<organism>
    <name type="scientific">Salmonella heidelberg (strain SL476)</name>
    <dbReference type="NCBI Taxonomy" id="454169"/>
    <lineage>
        <taxon>Bacteria</taxon>
        <taxon>Pseudomonadati</taxon>
        <taxon>Pseudomonadota</taxon>
        <taxon>Gammaproteobacteria</taxon>
        <taxon>Enterobacterales</taxon>
        <taxon>Enterobacteriaceae</taxon>
        <taxon>Salmonella</taxon>
    </lineage>
</organism>
<sequence length="84" mass="9722">MTDKIRTLQGRVVSDKMEKSIVVAIERFVKHPIYGKFIKRTTKMHVHDENNECGIGDVVEIRECRPLSKTKSWTLVRVVEKAVL</sequence>
<reference key="1">
    <citation type="journal article" date="2011" name="J. Bacteriol.">
        <title>Comparative genomics of 28 Salmonella enterica isolates: evidence for CRISPR-mediated adaptive sublineage evolution.</title>
        <authorList>
            <person name="Fricke W.F."/>
            <person name="Mammel M.K."/>
            <person name="McDermott P.F."/>
            <person name="Tartera C."/>
            <person name="White D.G."/>
            <person name="Leclerc J.E."/>
            <person name="Ravel J."/>
            <person name="Cebula T.A."/>
        </authorList>
    </citation>
    <scope>NUCLEOTIDE SEQUENCE [LARGE SCALE GENOMIC DNA]</scope>
    <source>
        <strain>SL476</strain>
    </source>
</reference>
<name>RS17_SALHS</name>
<feature type="chain" id="PRO_1000143298" description="Small ribosomal subunit protein uS17">
    <location>
        <begin position="1"/>
        <end position="84"/>
    </location>
</feature>
<gene>
    <name evidence="1" type="primary">rpsQ</name>
    <name type="ordered locus">SeHA_C3735</name>
</gene>
<comment type="function">
    <text evidence="1">One of the primary rRNA binding proteins, it binds specifically to the 5'-end of 16S ribosomal RNA.</text>
</comment>
<comment type="subunit">
    <text evidence="1">Part of the 30S ribosomal subunit.</text>
</comment>
<comment type="similarity">
    <text evidence="1">Belongs to the universal ribosomal protein uS17 family.</text>
</comment>
<accession>B4TKK6</accession>
<dbReference type="EMBL" id="CP001120">
    <property type="protein sequence ID" value="ACF68329.1"/>
    <property type="molecule type" value="Genomic_DNA"/>
</dbReference>
<dbReference type="RefSeq" id="WP_000130101.1">
    <property type="nucleotide sequence ID" value="NC_011083.1"/>
</dbReference>
<dbReference type="SMR" id="B4TKK6"/>
<dbReference type="GeneID" id="66757766"/>
<dbReference type="KEGG" id="seh:SeHA_C3735"/>
<dbReference type="HOGENOM" id="CLU_073626_1_1_6"/>
<dbReference type="Proteomes" id="UP000001866">
    <property type="component" value="Chromosome"/>
</dbReference>
<dbReference type="GO" id="GO:0022627">
    <property type="term" value="C:cytosolic small ribosomal subunit"/>
    <property type="evidence" value="ECO:0007669"/>
    <property type="project" value="TreeGrafter"/>
</dbReference>
<dbReference type="GO" id="GO:0019843">
    <property type="term" value="F:rRNA binding"/>
    <property type="evidence" value="ECO:0007669"/>
    <property type="project" value="UniProtKB-UniRule"/>
</dbReference>
<dbReference type="GO" id="GO:0003735">
    <property type="term" value="F:structural constituent of ribosome"/>
    <property type="evidence" value="ECO:0007669"/>
    <property type="project" value="InterPro"/>
</dbReference>
<dbReference type="GO" id="GO:0006412">
    <property type="term" value="P:translation"/>
    <property type="evidence" value="ECO:0007669"/>
    <property type="project" value="UniProtKB-UniRule"/>
</dbReference>
<dbReference type="CDD" id="cd00364">
    <property type="entry name" value="Ribosomal_uS17"/>
    <property type="match status" value="1"/>
</dbReference>
<dbReference type="FunFam" id="2.40.50.140:FF:000014">
    <property type="entry name" value="30S ribosomal protein S17"/>
    <property type="match status" value="1"/>
</dbReference>
<dbReference type="Gene3D" id="2.40.50.140">
    <property type="entry name" value="Nucleic acid-binding proteins"/>
    <property type="match status" value="1"/>
</dbReference>
<dbReference type="HAMAP" id="MF_01345_B">
    <property type="entry name" value="Ribosomal_uS17_B"/>
    <property type="match status" value="1"/>
</dbReference>
<dbReference type="InterPro" id="IPR012340">
    <property type="entry name" value="NA-bd_OB-fold"/>
</dbReference>
<dbReference type="InterPro" id="IPR000266">
    <property type="entry name" value="Ribosomal_uS17"/>
</dbReference>
<dbReference type="InterPro" id="IPR019984">
    <property type="entry name" value="Ribosomal_uS17_bact/chlr"/>
</dbReference>
<dbReference type="InterPro" id="IPR019979">
    <property type="entry name" value="Ribosomal_uS17_CS"/>
</dbReference>
<dbReference type="NCBIfam" id="NF004123">
    <property type="entry name" value="PRK05610.1"/>
    <property type="match status" value="1"/>
</dbReference>
<dbReference type="NCBIfam" id="TIGR03635">
    <property type="entry name" value="uS17_bact"/>
    <property type="match status" value="1"/>
</dbReference>
<dbReference type="PANTHER" id="PTHR10744">
    <property type="entry name" value="40S RIBOSOMAL PROTEIN S11 FAMILY MEMBER"/>
    <property type="match status" value="1"/>
</dbReference>
<dbReference type="PANTHER" id="PTHR10744:SF1">
    <property type="entry name" value="SMALL RIBOSOMAL SUBUNIT PROTEIN US17M"/>
    <property type="match status" value="1"/>
</dbReference>
<dbReference type="Pfam" id="PF00366">
    <property type="entry name" value="Ribosomal_S17"/>
    <property type="match status" value="1"/>
</dbReference>
<dbReference type="PRINTS" id="PR00973">
    <property type="entry name" value="RIBOSOMALS17"/>
</dbReference>
<dbReference type="SUPFAM" id="SSF50249">
    <property type="entry name" value="Nucleic acid-binding proteins"/>
    <property type="match status" value="1"/>
</dbReference>
<dbReference type="PROSITE" id="PS00056">
    <property type="entry name" value="RIBOSOMAL_S17"/>
    <property type="match status" value="1"/>
</dbReference>
<evidence type="ECO:0000255" key="1">
    <source>
        <dbReference type="HAMAP-Rule" id="MF_01345"/>
    </source>
</evidence>
<evidence type="ECO:0000305" key="2"/>
<keyword id="KW-0687">Ribonucleoprotein</keyword>
<keyword id="KW-0689">Ribosomal protein</keyword>
<keyword id="KW-0694">RNA-binding</keyword>
<keyword id="KW-0699">rRNA-binding</keyword>
<protein>
    <recommendedName>
        <fullName evidence="1">Small ribosomal subunit protein uS17</fullName>
    </recommendedName>
    <alternativeName>
        <fullName evidence="2">30S ribosomal protein S17</fullName>
    </alternativeName>
</protein>
<proteinExistence type="inferred from homology"/>